<dbReference type="EC" id="2.5.1.75" evidence="1"/>
<dbReference type="EMBL" id="CP000057">
    <property type="protein sequence ID" value="AAX87071.1"/>
    <property type="molecule type" value="Genomic_DNA"/>
</dbReference>
<dbReference type="RefSeq" id="WP_011271810.1">
    <property type="nucleotide sequence ID" value="NC_007146.2"/>
</dbReference>
<dbReference type="SMR" id="Q4QPH6"/>
<dbReference type="KEGG" id="hit:NTHI0081"/>
<dbReference type="HOGENOM" id="CLU_032616_0_0_6"/>
<dbReference type="Proteomes" id="UP000002525">
    <property type="component" value="Chromosome"/>
</dbReference>
<dbReference type="GO" id="GO:0005524">
    <property type="term" value="F:ATP binding"/>
    <property type="evidence" value="ECO:0007669"/>
    <property type="project" value="UniProtKB-UniRule"/>
</dbReference>
<dbReference type="GO" id="GO:0052381">
    <property type="term" value="F:tRNA dimethylallyltransferase activity"/>
    <property type="evidence" value="ECO:0007669"/>
    <property type="project" value="UniProtKB-UniRule"/>
</dbReference>
<dbReference type="GO" id="GO:0006400">
    <property type="term" value="P:tRNA modification"/>
    <property type="evidence" value="ECO:0007669"/>
    <property type="project" value="TreeGrafter"/>
</dbReference>
<dbReference type="FunFam" id="1.10.20.140:FF:000001">
    <property type="entry name" value="tRNA dimethylallyltransferase"/>
    <property type="match status" value="1"/>
</dbReference>
<dbReference type="Gene3D" id="1.10.20.140">
    <property type="match status" value="1"/>
</dbReference>
<dbReference type="Gene3D" id="3.40.50.300">
    <property type="entry name" value="P-loop containing nucleotide triphosphate hydrolases"/>
    <property type="match status" value="1"/>
</dbReference>
<dbReference type="HAMAP" id="MF_00185">
    <property type="entry name" value="IPP_trans"/>
    <property type="match status" value="1"/>
</dbReference>
<dbReference type="InterPro" id="IPR039657">
    <property type="entry name" value="Dimethylallyltransferase"/>
</dbReference>
<dbReference type="InterPro" id="IPR018022">
    <property type="entry name" value="IPT"/>
</dbReference>
<dbReference type="InterPro" id="IPR027417">
    <property type="entry name" value="P-loop_NTPase"/>
</dbReference>
<dbReference type="NCBIfam" id="TIGR00174">
    <property type="entry name" value="miaA"/>
    <property type="match status" value="1"/>
</dbReference>
<dbReference type="PANTHER" id="PTHR11088">
    <property type="entry name" value="TRNA DIMETHYLALLYLTRANSFERASE"/>
    <property type="match status" value="1"/>
</dbReference>
<dbReference type="PANTHER" id="PTHR11088:SF60">
    <property type="entry name" value="TRNA DIMETHYLALLYLTRANSFERASE"/>
    <property type="match status" value="1"/>
</dbReference>
<dbReference type="Pfam" id="PF01715">
    <property type="entry name" value="IPPT"/>
    <property type="match status" value="1"/>
</dbReference>
<dbReference type="SUPFAM" id="SSF52540">
    <property type="entry name" value="P-loop containing nucleoside triphosphate hydrolases"/>
    <property type="match status" value="1"/>
</dbReference>
<comment type="function">
    <text evidence="1">Catalyzes the transfer of a dimethylallyl group onto the adenine at position 37 in tRNAs that read codons beginning with uridine, leading to the formation of N6-(dimethylallyl)adenosine (i(6)A).</text>
</comment>
<comment type="catalytic activity">
    <reaction evidence="1">
        <text>adenosine(37) in tRNA + dimethylallyl diphosphate = N(6)-dimethylallyladenosine(37) in tRNA + diphosphate</text>
        <dbReference type="Rhea" id="RHEA:26482"/>
        <dbReference type="Rhea" id="RHEA-COMP:10162"/>
        <dbReference type="Rhea" id="RHEA-COMP:10375"/>
        <dbReference type="ChEBI" id="CHEBI:33019"/>
        <dbReference type="ChEBI" id="CHEBI:57623"/>
        <dbReference type="ChEBI" id="CHEBI:74411"/>
        <dbReference type="ChEBI" id="CHEBI:74415"/>
        <dbReference type="EC" id="2.5.1.75"/>
    </reaction>
</comment>
<comment type="cofactor">
    <cofactor evidence="1">
        <name>Mg(2+)</name>
        <dbReference type="ChEBI" id="CHEBI:18420"/>
    </cofactor>
</comment>
<comment type="subunit">
    <text evidence="1">Monomer.</text>
</comment>
<comment type="similarity">
    <text evidence="1">Belongs to the IPP transferase family.</text>
</comment>
<evidence type="ECO:0000255" key="1">
    <source>
        <dbReference type="HAMAP-Rule" id="MF_00185"/>
    </source>
</evidence>
<sequence>MKPTAIFLMGPTASGKTDLAIQLRSSLPVEVISVDSALIYKGMDIGTAKPSKEELALAPHRLIDILDPSESYSAMNFRDDALREMADITAQGKIPLLVGGTMLYYKALIEGLSPLPSADENIRAELEQKAAQQGWAALHTELAKIDPISAARINPSDSQRINRALEVFYITGKSLTELTEEKGEALPYDFVQFAIAPQDRHVLHERIEQRFHKMIELGFQAEVEKLYARGDLNINLPSIRCVGYRQMWEYLQGDYDHEEMIFRGICATRQLAKRQLTWLRGWKTPIQWLDSLQPQQAKETVLRHLDSYQKG</sequence>
<reference key="1">
    <citation type="journal article" date="2005" name="J. Bacteriol.">
        <title>Genomic sequence of an otitis media isolate of nontypeable Haemophilus influenzae: comparative study with H. influenzae serotype d, strain KW20.</title>
        <authorList>
            <person name="Harrison A."/>
            <person name="Dyer D.W."/>
            <person name="Gillaspy A."/>
            <person name="Ray W.C."/>
            <person name="Mungur R."/>
            <person name="Carson M.B."/>
            <person name="Zhong H."/>
            <person name="Gipson J."/>
            <person name="Gipson M."/>
            <person name="Johnson L.S."/>
            <person name="Lewis L."/>
            <person name="Bakaletz L.O."/>
            <person name="Munson R.S. Jr."/>
        </authorList>
    </citation>
    <scope>NUCLEOTIDE SEQUENCE [LARGE SCALE GENOMIC DNA]</scope>
    <source>
        <strain>86-028NP</strain>
    </source>
</reference>
<proteinExistence type="inferred from homology"/>
<gene>
    <name evidence="1" type="primary">miaA</name>
    <name type="ordered locus">NTHI0081</name>
</gene>
<organism>
    <name type="scientific">Haemophilus influenzae (strain 86-028NP)</name>
    <dbReference type="NCBI Taxonomy" id="281310"/>
    <lineage>
        <taxon>Bacteria</taxon>
        <taxon>Pseudomonadati</taxon>
        <taxon>Pseudomonadota</taxon>
        <taxon>Gammaproteobacteria</taxon>
        <taxon>Pasteurellales</taxon>
        <taxon>Pasteurellaceae</taxon>
        <taxon>Haemophilus</taxon>
    </lineage>
</organism>
<keyword id="KW-0067">ATP-binding</keyword>
<keyword id="KW-0460">Magnesium</keyword>
<keyword id="KW-0547">Nucleotide-binding</keyword>
<keyword id="KW-0808">Transferase</keyword>
<keyword id="KW-0819">tRNA processing</keyword>
<accession>Q4QPH6</accession>
<protein>
    <recommendedName>
        <fullName evidence="1">tRNA dimethylallyltransferase</fullName>
        <ecNumber evidence="1">2.5.1.75</ecNumber>
    </recommendedName>
    <alternativeName>
        <fullName evidence="1">Dimethylallyl diphosphate:tRNA dimethylallyltransferase</fullName>
        <shortName evidence="1">DMAPP:tRNA dimethylallyltransferase</shortName>
        <shortName evidence="1">DMATase</shortName>
    </alternativeName>
    <alternativeName>
        <fullName evidence="1">Isopentenyl-diphosphate:tRNA isopentenyltransferase</fullName>
        <shortName evidence="1">IPP transferase</shortName>
        <shortName evidence="1">IPPT</shortName>
        <shortName evidence="1">IPTase</shortName>
    </alternativeName>
</protein>
<feature type="chain" id="PRO_1000020605" description="tRNA dimethylallyltransferase">
    <location>
        <begin position="1"/>
        <end position="311"/>
    </location>
</feature>
<feature type="region of interest" description="Interaction with substrate tRNA" evidence="1">
    <location>
        <begin position="35"/>
        <end position="38"/>
    </location>
</feature>
<feature type="region of interest" description="Interaction with substrate tRNA" evidence="1">
    <location>
        <begin position="159"/>
        <end position="163"/>
    </location>
</feature>
<feature type="region of interest" description="Interaction with substrate tRNA" evidence="1">
    <location>
        <begin position="240"/>
        <end position="245"/>
    </location>
</feature>
<feature type="binding site" evidence="1">
    <location>
        <begin position="10"/>
        <end position="17"/>
    </location>
    <ligand>
        <name>ATP</name>
        <dbReference type="ChEBI" id="CHEBI:30616"/>
    </ligand>
</feature>
<feature type="binding site" evidence="1">
    <location>
        <begin position="12"/>
        <end position="17"/>
    </location>
    <ligand>
        <name>substrate</name>
    </ligand>
</feature>
<feature type="site" description="Interaction with substrate tRNA" evidence="1">
    <location>
        <position position="101"/>
    </location>
</feature>
<feature type="site" description="Interaction with substrate tRNA" evidence="1">
    <location>
        <position position="123"/>
    </location>
</feature>
<name>MIAA_HAEI8</name>